<keyword id="KW-1003">Cell membrane</keyword>
<keyword id="KW-0342">GTP-binding</keyword>
<keyword id="KW-0378">Hydrolase</keyword>
<keyword id="KW-0472">Membrane</keyword>
<keyword id="KW-0547">Nucleotide-binding</keyword>
<keyword id="KW-0648">Protein biosynthesis</keyword>
<keyword id="KW-1185">Reference proteome</keyword>
<protein>
    <recommendedName>
        <fullName evidence="1">Elongation factor 4</fullName>
        <shortName evidence="1">EF-4</shortName>
        <ecNumber evidence="1">3.6.5.n1</ecNumber>
    </recommendedName>
    <alternativeName>
        <fullName evidence="1">Ribosomal back-translocase LepA</fullName>
    </alternativeName>
</protein>
<accession>Q1AVV0</accession>
<comment type="function">
    <text evidence="1">Required for accurate and efficient protein synthesis under certain stress conditions. May act as a fidelity factor of the translation reaction, by catalyzing a one-codon backward translocation of tRNAs on improperly translocated ribosomes. Back-translocation proceeds from a post-translocation (POST) complex to a pre-translocation (PRE) complex, thus giving elongation factor G a second chance to translocate the tRNAs correctly. Binds to ribosomes in a GTP-dependent manner.</text>
</comment>
<comment type="catalytic activity">
    <reaction evidence="1">
        <text>GTP + H2O = GDP + phosphate + H(+)</text>
        <dbReference type="Rhea" id="RHEA:19669"/>
        <dbReference type="ChEBI" id="CHEBI:15377"/>
        <dbReference type="ChEBI" id="CHEBI:15378"/>
        <dbReference type="ChEBI" id="CHEBI:37565"/>
        <dbReference type="ChEBI" id="CHEBI:43474"/>
        <dbReference type="ChEBI" id="CHEBI:58189"/>
        <dbReference type="EC" id="3.6.5.n1"/>
    </reaction>
</comment>
<comment type="subcellular location">
    <subcellularLocation>
        <location evidence="1">Cell membrane</location>
        <topology evidence="1">Peripheral membrane protein</topology>
        <orientation evidence="1">Cytoplasmic side</orientation>
    </subcellularLocation>
</comment>
<comment type="similarity">
    <text evidence="1">Belongs to the TRAFAC class translation factor GTPase superfamily. Classic translation factor GTPase family. LepA subfamily.</text>
</comment>
<reference key="1">
    <citation type="submission" date="2006-06" db="EMBL/GenBank/DDBJ databases">
        <title>Complete sequence of Rubrobacter xylanophilus DSM 9941.</title>
        <authorList>
            <consortium name="US DOE Joint Genome Institute"/>
            <person name="Copeland A."/>
            <person name="Lucas S."/>
            <person name="Lapidus A."/>
            <person name="Barry K."/>
            <person name="Detter J.C."/>
            <person name="Glavina del Rio T."/>
            <person name="Hammon N."/>
            <person name="Israni S."/>
            <person name="Dalin E."/>
            <person name="Tice H."/>
            <person name="Pitluck S."/>
            <person name="Munk A.C."/>
            <person name="Brettin T."/>
            <person name="Bruce D."/>
            <person name="Han C."/>
            <person name="Tapia R."/>
            <person name="Gilna P."/>
            <person name="Schmutz J."/>
            <person name="Larimer F."/>
            <person name="Land M."/>
            <person name="Hauser L."/>
            <person name="Kyrpides N."/>
            <person name="Lykidis A."/>
            <person name="da Costa M.S."/>
            <person name="Rainey F.A."/>
            <person name="Empadinhas N."/>
            <person name="Jolivet E."/>
            <person name="Battista J.R."/>
            <person name="Richardson P."/>
        </authorList>
    </citation>
    <scope>NUCLEOTIDE SEQUENCE [LARGE SCALE GENOMIC DNA]</scope>
    <source>
        <strain>DSM 9941 / JCM 11954 / NBRC 16129 / PRD-1</strain>
    </source>
</reference>
<organism>
    <name type="scientific">Rubrobacter xylanophilus (strain DSM 9941 / JCM 11954 / NBRC 16129 / PRD-1)</name>
    <dbReference type="NCBI Taxonomy" id="266117"/>
    <lineage>
        <taxon>Bacteria</taxon>
        <taxon>Bacillati</taxon>
        <taxon>Actinomycetota</taxon>
        <taxon>Rubrobacteria</taxon>
        <taxon>Rubrobacterales</taxon>
        <taxon>Rubrobacteraceae</taxon>
        <taxon>Rubrobacter</taxon>
    </lineage>
</organism>
<gene>
    <name evidence="1" type="primary">lepA</name>
    <name type="ordered locus">Rxyl_1516</name>
</gene>
<feature type="chain" id="PRO_0000265698" description="Elongation factor 4">
    <location>
        <begin position="1"/>
        <end position="600"/>
    </location>
</feature>
<feature type="domain" description="tr-type G">
    <location>
        <begin position="13"/>
        <end position="194"/>
    </location>
</feature>
<feature type="binding site" evidence="1">
    <location>
        <begin position="25"/>
        <end position="30"/>
    </location>
    <ligand>
        <name>GTP</name>
        <dbReference type="ChEBI" id="CHEBI:37565"/>
    </ligand>
</feature>
<feature type="binding site" evidence="1">
    <location>
        <begin position="141"/>
        <end position="144"/>
    </location>
    <ligand>
        <name>GTP</name>
        <dbReference type="ChEBI" id="CHEBI:37565"/>
    </ligand>
</feature>
<name>LEPA_RUBXD</name>
<sequence length="600" mass="66672">MGNHGKLSRVSADRIRNFCIIAHIDHGKSTLADRLLDLTDAVPERERVDQILDTMELERERGITIKAQAVRLLYNRPDGVWTLNLIDTPGHVDFTYEVSRAIAACEGALLVVDASQGIQAQTLANLYLAMEHDLEIIPVLNKIDLPVADVPAATEELVELLGVEPEEVLKISAKTGEGVRGVLDAIVERIPPPRSEHPQTRALVFDSNYDPYRGVIALARVFDGGLKKGDRVQAMGSEEEFEILEVGCYSPKPTALPALQTGQVGYVVAGLKDIGALRVGDTITSADDPAPEPLPGYARVLPTVFCGLYPTEGDDFERLRDALARLQLNDASLFFEPENSRLGFGFRCGFLGLLHMEIVQERLEREFDLDLIVTSPSVKYQVVVDGEVREVTNPSDLPESYDEIREPVVRATIICPREHVGAVMGLCHEKRGVSVGMEYISSLRVQLTYDLPLAEVITDFFDQLKSRTRGYASYDYEPVGYQPADLVKVEVLVAGDPVDSLSIIVHRDKAYQRGRALVEKLKELIPRQQFEVPVQAAVGKRVIARETVRAYRKDVTAKCYGGDITRKRKLLEKQKAGKRRMKQVGRVEIPQEAFLAAIRI</sequence>
<proteinExistence type="inferred from homology"/>
<evidence type="ECO:0000255" key="1">
    <source>
        <dbReference type="HAMAP-Rule" id="MF_00071"/>
    </source>
</evidence>
<dbReference type="EC" id="3.6.5.n1" evidence="1"/>
<dbReference type="EMBL" id="CP000386">
    <property type="protein sequence ID" value="ABG04478.1"/>
    <property type="molecule type" value="Genomic_DNA"/>
</dbReference>
<dbReference type="RefSeq" id="WP_011564495.1">
    <property type="nucleotide sequence ID" value="NC_008148.1"/>
</dbReference>
<dbReference type="SMR" id="Q1AVV0"/>
<dbReference type="STRING" id="266117.Rxyl_1516"/>
<dbReference type="KEGG" id="rxy:Rxyl_1516"/>
<dbReference type="eggNOG" id="COG0481">
    <property type="taxonomic scope" value="Bacteria"/>
</dbReference>
<dbReference type="HOGENOM" id="CLU_009995_3_3_11"/>
<dbReference type="OrthoDB" id="9801472at2"/>
<dbReference type="PhylomeDB" id="Q1AVV0"/>
<dbReference type="Proteomes" id="UP000006637">
    <property type="component" value="Chromosome"/>
</dbReference>
<dbReference type="GO" id="GO:0005886">
    <property type="term" value="C:plasma membrane"/>
    <property type="evidence" value="ECO:0007669"/>
    <property type="project" value="UniProtKB-SubCell"/>
</dbReference>
<dbReference type="GO" id="GO:0005525">
    <property type="term" value="F:GTP binding"/>
    <property type="evidence" value="ECO:0007669"/>
    <property type="project" value="UniProtKB-UniRule"/>
</dbReference>
<dbReference type="GO" id="GO:0003924">
    <property type="term" value="F:GTPase activity"/>
    <property type="evidence" value="ECO:0007669"/>
    <property type="project" value="UniProtKB-UniRule"/>
</dbReference>
<dbReference type="GO" id="GO:0043022">
    <property type="term" value="F:ribosome binding"/>
    <property type="evidence" value="ECO:0007669"/>
    <property type="project" value="UniProtKB-UniRule"/>
</dbReference>
<dbReference type="GO" id="GO:0003746">
    <property type="term" value="F:translation elongation factor activity"/>
    <property type="evidence" value="ECO:0007669"/>
    <property type="project" value="UniProtKB-UniRule"/>
</dbReference>
<dbReference type="GO" id="GO:0045727">
    <property type="term" value="P:positive regulation of translation"/>
    <property type="evidence" value="ECO:0007669"/>
    <property type="project" value="UniProtKB-UniRule"/>
</dbReference>
<dbReference type="CDD" id="cd03699">
    <property type="entry name" value="EF4_II"/>
    <property type="match status" value="1"/>
</dbReference>
<dbReference type="CDD" id="cd16260">
    <property type="entry name" value="EF4_III"/>
    <property type="match status" value="1"/>
</dbReference>
<dbReference type="CDD" id="cd01890">
    <property type="entry name" value="LepA"/>
    <property type="match status" value="1"/>
</dbReference>
<dbReference type="CDD" id="cd03709">
    <property type="entry name" value="lepA_C"/>
    <property type="match status" value="1"/>
</dbReference>
<dbReference type="FunFam" id="3.40.50.300:FF:000078">
    <property type="entry name" value="Elongation factor 4"/>
    <property type="match status" value="1"/>
</dbReference>
<dbReference type="FunFam" id="2.40.30.10:FF:000015">
    <property type="entry name" value="Translation factor GUF1, mitochondrial"/>
    <property type="match status" value="1"/>
</dbReference>
<dbReference type="FunFam" id="3.30.70.240:FF:000007">
    <property type="entry name" value="Translation factor GUF1, mitochondrial"/>
    <property type="match status" value="1"/>
</dbReference>
<dbReference type="FunFam" id="3.30.70.2570:FF:000001">
    <property type="entry name" value="Translation factor GUF1, mitochondrial"/>
    <property type="match status" value="1"/>
</dbReference>
<dbReference type="FunFam" id="3.30.70.870:FF:000004">
    <property type="entry name" value="Translation factor GUF1, mitochondrial"/>
    <property type="match status" value="1"/>
</dbReference>
<dbReference type="Gene3D" id="3.30.70.240">
    <property type="match status" value="1"/>
</dbReference>
<dbReference type="Gene3D" id="3.30.70.2570">
    <property type="entry name" value="Elongation factor 4, C-terminal domain"/>
    <property type="match status" value="1"/>
</dbReference>
<dbReference type="Gene3D" id="3.30.70.870">
    <property type="entry name" value="Elongation Factor G (Translational Gtpase), domain 3"/>
    <property type="match status" value="1"/>
</dbReference>
<dbReference type="Gene3D" id="3.40.50.300">
    <property type="entry name" value="P-loop containing nucleotide triphosphate hydrolases"/>
    <property type="match status" value="1"/>
</dbReference>
<dbReference type="Gene3D" id="2.40.30.10">
    <property type="entry name" value="Translation factors"/>
    <property type="match status" value="1"/>
</dbReference>
<dbReference type="HAMAP" id="MF_00071">
    <property type="entry name" value="LepA"/>
    <property type="match status" value="1"/>
</dbReference>
<dbReference type="InterPro" id="IPR006297">
    <property type="entry name" value="EF-4"/>
</dbReference>
<dbReference type="InterPro" id="IPR035647">
    <property type="entry name" value="EFG_III/V"/>
</dbReference>
<dbReference type="InterPro" id="IPR000640">
    <property type="entry name" value="EFG_V-like"/>
</dbReference>
<dbReference type="InterPro" id="IPR004161">
    <property type="entry name" value="EFTu-like_2"/>
</dbReference>
<dbReference type="InterPro" id="IPR031157">
    <property type="entry name" value="G_TR_CS"/>
</dbReference>
<dbReference type="InterPro" id="IPR038363">
    <property type="entry name" value="LepA_C_sf"/>
</dbReference>
<dbReference type="InterPro" id="IPR013842">
    <property type="entry name" value="LepA_CTD"/>
</dbReference>
<dbReference type="InterPro" id="IPR035654">
    <property type="entry name" value="LepA_IV"/>
</dbReference>
<dbReference type="InterPro" id="IPR027417">
    <property type="entry name" value="P-loop_NTPase"/>
</dbReference>
<dbReference type="InterPro" id="IPR005225">
    <property type="entry name" value="Small_GTP-bd"/>
</dbReference>
<dbReference type="InterPro" id="IPR000795">
    <property type="entry name" value="T_Tr_GTP-bd_dom"/>
</dbReference>
<dbReference type="InterPro" id="IPR009000">
    <property type="entry name" value="Transl_B-barrel_sf"/>
</dbReference>
<dbReference type="NCBIfam" id="TIGR01393">
    <property type="entry name" value="lepA"/>
    <property type="match status" value="1"/>
</dbReference>
<dbReference type="NCBIfam" id="TIGR00231">
    <property type="entry name" value="small_GTP"/>
    <property type="match status" value="1"/>
</dbReference>
<dbReference type="PANTHER" id="PTHR43512:SF4">
    <property type="entry name" value="TRANSLATION FACTOR GUF1 HOMOLOG, CHLOROPLASTIC"/>
    <property type="match status" value="1"/>
</dbReference>
<dbReference type="PANTHER" id="PTHR43512">
    <property type="entry name" value="TRANSLATION FACTOR GUF1-RELATED"/>
    <property type="match status" value="1"/>
</dbReference>
<dbReference type="Pfam" id="PF00679">
    <property type="entry name" value="EFG_C"/>
    <property type="match status" value="1"/>
</dbReference>
<dbReference type="Pfam" id="PF00009">
    <property type="entry name" value="GTP_EFTU"/>
    <property type="match status" value="1"/>
</dbReference>
<dbReference type="Pfam" id="PF03144">
    <property type="entry name" value="GTP_EFTU_D2"/>
    <property type="match status" value="1"/>
</dbReference>
<dbReference type="Pfam" id="PF06421">
    <property type="entry name" value="LepA_C"/>
    <property type="match status" value="1"/>
</dbReference>
<dbReference type="PRINTS" id="PR00315">
    <property type="entry name" value="ELONGATNFCT"/>
</dbReference>
<dbReference type="SMART" id="SM00838">
    <property type="entry name" value="EFG_C"/>
    <property type="match status" value="1"/>
</dbReference>
<dbReference type="SUPFAM" id="SSF54980">
    <property type="entry name" value="EF-G C-terminal domain-like"/>
    <property type="match status" value="2"/>
</dbReference>
<dbReference type="SUPFAM" id="SSF52540">
    <property type="entry name" value="P-loop containing nucleoside triphosphate hydrolases"/>
    <property type="match status" value="1"/>
</dbReference>
<dbReference type="SUPFAM" id="SSF50447">
    <property type="entry name" value="Translation proteins"/>
    <property type="match status" value="1"/>
</dbReference>
<dbReference type="PROSITE" id="PS00301">
    <property type="entry name" value="G_TR_1"/>
    <property type="match status" value="1"/>
</dbReference>
<dbReference type="PROSITE" id="PS51722">
    <property type="entry name" value="G_TR_2"/>
    <property type="match status" value="1"/>
</dbReference>